<organism>
    <name type="scientific">Methanocaldococcus jannaschii (strain ATCC 43067 / DSM 2661 / JAL-1 / JCM 10045 / NBRC 100440)</name>
    <name type="common">Methanococcus jannaschii</name>
    <dbReference type="NCBI Taxonomy" id="243232"/>
    <lineage>
        <taxon>Archaea</taxon>
        <taxon>Methanobacteriati</taxon>
        <taxon>Methanobacteriota</taxon>
        <taxon>Methanomada group</taxon>
        <taxon>Methanococci</taxon>
        <taxon>Methanococcales</taxon>
        <taxon>Methanocaldococcaceae</taxon>
        <taxon>Methanocaldococcus</taxon>
    </lineage>
</organism>
<keyword id="KW-1003">Cell membrane</keyword>
<keyword id="KW-0472">Membrane</keyword>
<keyword id="KW-1185">Reference proteome</keyword>
<keyword id="KW-0812">Transmembrane</keyword>
<keyword id="KW-1133">Transmembrane helix</keyword>
<comment type="subcellular location">
    <subcellularLocation>
        <location evidence="2">Cell membrane</location>
        <topology evidence="2">Multi-pass membrane protein</topology>
    </subcellularLocation>
</comment>
<protein>
    <recommendedName>
        <fullName>Uncharacterized protein MJ1433</fullName>
    </recommendedName>
</protein>
<feature type="chain" id="PRO_0000107325" description="Uncharacterized protein MJ1433">
    <location>
        <begin position="1"/>
        <end position="247"/>
    </location>
</feature>
<feature type="transmembrane region" description="Helical" evidence="1">
    <location>
        <begin position="9"/>
        <end position="29"/>
    </location>
</feature>
<feature type="transmembrane region" description="Helical" evidence="1">
    <location>
        <begin position="37"/>
        <end position="57"/>
    </location>
</feature>
<evidence type="ECO:0000255" key="1"/>
<evidence type="ECO:0000305" key="2"/>
<proteinExistence type="predicted"/>
<reference key="1">
    <citation type="journal article" date="1996" name="Science">
        <title>Complete genome sequence of the methanogenic archaeon, Methanococcus jannaschii.</title>
        <authorList>
            <person name="Bult C.J."/>
            <person name="White O."/>
            <person name="Olsen G.J."/>
            <person name="Zhou L."/>
            <person name="Fleischmann R.D."/>
            <person name="Sutton G.G."/>
            <person name="Blake J.A."/>
            <person name="FitzGerald L.M."/>
            <person name="Clayton R.A."/>
            <person name="Gocayne J.D."/>
            <person name="Kerlavage A.R."/>
            <person name="Dougherty B.A."/>
            <person name="Tomb J.-F."/>
            <person name="Adams M.D."/>
            <person name="Reich C.I."/>
            <person name="Overbeek R."/>
            <person name="Kirkness E.F."/>
            <person name="Weinstock K.G."/>
            <person name="Merrick J.M."/>
            <person name="Glodek A."/>
            <person name="Scott J.L."/>
            <person name="Geoghagen N.S.M."/>
            <person name="Weidman J.F."/>
            <person name="Fuhrmann J.L."/>
            <person name="Nguyen D."/>
            <person name="Utterback T.R."/>
            <person name="Kelley J.M."/>
            <person name="Peterson J.D."/>
            <person name="Sadow P.W."/>
            <person name="Hanna M.C."/>
            <person name="Cotton M.D."/>
            <person name="Roberts K.M."/>
            <person name="Hurst M.A."/>
            <person name="Kaine B.P."/>
            <person name="Borodovsky M."/>
            <person name="Klenk H.-P."/>
            <person name="Fraser C.M."/>
            <person name="Smith H.O."/>
            <person name="Woese C.R."/>
            <person name="Venter J.C."/>
        </authorList>
    </citation>
    <scope>NUCLEOTIDE SEQUENCE [LARGE SCALE GENOMIC DNA]</scope>
    <source>
        <strain>ATCC 43067 / DSM 2661 / JAL-1 / JCM 10045 / NBRC 100440</strain>
    </source>
</reference>
<accession>Q58828</accession>
<name>Y1433_METJA</name>
<sequence length="247" mass="29480">MNDKRYMLIIAICLIFLSILVYSIHFLIFGKVDYILSYFLLHLAFVPIEVLLVSLIIEKILDYREKKKILEKLNMVVGSFFNSVGEELLKIILEGDVGNIRDYLKISDEWNDKTYEETKKLLMNYDCNIDIEKIDLYKLKNLLERNKEFLLRLMENPLLLEHESFTELLLAVFHLADELHRREDLSNLPKSDLDHLKNDIIRVYKLLIIQWLNYLMHLKDNYPYLYSLCLRANPFDNKSIIIEEDDK</sequence>
<gene>
    <name type="ordered locus">MJ1433</name>
</gene>
<dbReference type="EMBL" id="L77117">
    <property type="protein sequence ID" value="AAB99443.1"/>
    <property type="molecule type" value="Genomic_DNA"/>
</dbReference>
<dbReference type="PIR" id="H64478">
    <property type="entry name" value="H64478"/>
</dbReference>
<dbReference type="RefSeq" id="WP_010870951.1">
    <property type="nucleotide sequence ID" value="NC_000909.1"/>
</dbReference>
<dbReference type="SMR" id="Q58828"/>
<dbReference type="STRING" id="243232.MJ_1433"/>
<dbReference type="PaxDb" id="243232-MJ_1433"/>
<dbReference type="EnsemblBacteria" id="AAB99443">
    <property type="protein sequence ID" value="AAB99443"/>
    <property type="gene ID" value="MJ_1433"/>
</dbReference>
<dbReference type="GeneID" id="1452337"/>
<dbReference type="KEGG" id="mja:MJ_1433"/>
<dbReference type="eggNOG" id="arCOG03165">
    <property type="taxonomic scope" value="Archaea"/>
</dbReference>
<dbReference type="HOGENOM" id="CLU_087537_0_0_2"/>
<dbReference type="InParanoid" id="Q58828"/>
<dbReference type="OrthoDB" id="56871at2157"/>
<dbReference type="PhylomeDB" id="Q58828"/>
<dbReference type="Proteomes" id="UP000000805">
    <property type="component" value="Chromosome"/>
</dbReference>
<dbReference type="GO" id="GO:0005886">
    <property type="term" value="C:plasma membrane"/>
    <property type="evidence" value="ECO:0007669"/>
    <property type="project" value="UniProtKB-SubCell"/>
</dbReference>